<dbReference type="EMBL" id="AF353092">
    <property type="protein sequence ID" value="AAK43834.1"/>
    <property type="molecule type" value="mRNA"/>
</dbReference>
<dbReference type="EMBL" id="AC004482">
    <property type="protein sequence ID" value="AAC17087.1"/>
    <property type="molecule type" value="Genomic_DNA"/>
</dbReference>
<dbReference type="EMBL" id="CP002685">
    <property type="protein sequence ID" value="AEC07486.1"/>
    <property type="molecule type" value="Genomic_DNA"/>
</dbReference>
<dbReference type="EMBL" id="CP002685">
    <property type="protein sequence ID" value="AEC07487.1"/>
    <property type="molecule type" value="Genomic_DNA"/>
</dbReference>
<dbReference type="EMBL" id="CP002685">
    <property type="protein sequence ID" value="AEC07488.1"/>
    <property type="molecule type" value="Genomic_DNA"/>
</dbReference>
<dbReference type="EMBL" id="AY058179">
    <property type="protein sequence ID" value="AAL25593.1"/>
    <property type="molecule type" value="mRNA"/>
</dbReference>
<dbReference type="EMBL" id="AY142019">
    <property type="protein sequence ID" value="AAM98283.1"/>
    <property type="molecule type" value="mRNA"/>
</dbReference>
<dbReference type="EMBL" id="AK222058">
    <property type="protein sequence ID" value="BAD94844.1"/>
    <property type="status" value="ALT_INIT"/>
    <property type="molecule type" value="mRNA"/>
</dbReference>
<dbReference type="PIR" id="T02415">
    <property type="entry name" value="T02415"/>
</dbReference>
<dbReference type="RefSeq" id="NP_001031404.1">
    <property type="nucleotide sequence ID" value="NM_001036327.2"/>
</dbReference>
<dbReference type="RefSeq" id="NP_179956.1">
    <property type="nucleotide sequence ID" value="NM_127939.3"/>
</dbReference>
<dbReference type="RefSeq" id="NP_850044.1">
    <property type="nucleotide sequence ID" value="NM_179713.3"/>
</dbReference>
<dbReference type="SMR" id="Q94KL5"/>
<dbReference type="BioGRID" id="2260">
    <property type="interactions" value="46"/>
</dbReference>
<dbReference type="FunCoup" id="Q94KL5">
    <property type="interactions" value="156"/>
</dbReference>
<dbReference type="IntAct" id="Q94KL5">
    <property type="interactions" value="49"/>
</dbReference>
<dbReference type="STRING" id="3702.Q94KL5"/>
<dbReference type="PaxDb" id="3702-AT2G23760.2"/>
<dbReference type="ProteomicsDB" id="240802"/>
<dbReference type="EnsemblPlants" id="AT2G23760.1">
    <property type="protein sequence ID" value="AT2G23760.1"/>
    <property type="gene ID" value="AT2G23760"/>
</dbReference>
<dbReference type="EnsemblPlants" id="AT2G23760.2">
    <property type="protein sequence ID" value="AT2G23760.2"/>
    <property type="gene ID" value="AT2G23760"/>
</dbReference>
<dbReference type="EnsemblPlants" id="AT2G23760.3">
    <property type="protein sequence ID" value="AT2G23760.3"/>
    <property type="gene ID" value="AT2G23760"/>
</dbReference>
<dbReference type="GeneID" id="816908"/>
<dbReference type="Gramene" id="AT2G23760.1">
    <property type="protein sequence ID" value="AT2G23760.1"/>
    <property type="gene ID" value="AT2G23760"/>
</dbReference>
<dbReference type="Gramene" id="AT2G23760.2">
    <property type="protein sequence ID" value="AT2G23760.2"/>
    <property type="gene ID" value="AT2G23760"/>
</dbReference>
<dbReference type="Gramene" id="AT2G23760.3">
    <property type="protein sequence ID" value="AT2G23760.3"/>
    <property type="gene ID" value="AT2G23760"/>
</dbReference>
<dbReference type="KEGG" id="ath:AT2G23760"/>
<dbReference type="Araport" id="AT2G23760"/>
<dbReference type="TAIR" id="AT2G23760">
    <property type="gene designation" value="BLH4"/>
</dbReference>
<dbReference type="eggNOG" id="KOG0773">
    <property type="taxonomic scope" value="Eukaryota"/>
</dbReference>
<dbReference type="HOGENOM" id="CLU_011058_2_0_1"/>
<dbReference type="InParanoid" id="Q94KL5"/>
<dbReference type="OrthoDB" id="10056939at2759"/>
<dbReference type="PhylomeDB" id="Q94KL5"/>
<dbReference type="PRO" id="PR:Q94KL5"/>
<dbReference type="Proteomes" id="UP000006548">
    <property type="component" value="Chromosome 2"/>
</dbReference>
<dbReference type="ExpressionAtlas" id="Q94KL5">
    <property type="expression patterns" value="baseline and differential"/>
</dbReference>
<dbReference type="GO" id="GO:0005634">
    <property type="term" value="C:nucleus"/>
    <property type="evidence" value="ECO:0007669"/>
    <property type="project" value="UniProtKB-SubCell"/>
</dbReference>
<dbReference type="GO" id="GO:0003677">
    <property type="term" value="F:DNA binding"/>
    <property type="evidence" value="ECO:0007669"/>
    <property type="project" value="UniProtKB-KW"/>
</dbReference>
<dbReference type="GO" id="GO:0003700">
    <property type="term" value="F:DNA-binding transcription factor activity"/>
    <property type="evidence" value="ECO:0000250"/>
    <property type="project" value="TAIR"/>
</dbReference>
<dbReference type="GO" id="GO:0009965">
    <property type="term" value="P:leaf morphogenesis"/>
    <property type="evidence" value="ECO:0000316"/>
    <property type="project" value="TAIR"/>
</dbReference>
<dbReference type="GO" id="GO:0048363">
    <property type="term" value="P:mucilage pectin metabolic process"/>
    <property type="evidence" value="ECO:0000315"/>
    <property type="project" value="TAIR"/>
</dbReference>
<dbReference type="CDD" id="cd00086">
    <property type="entry name" value="homeodomain"/>
    <property type="match status" value="1"/>
</dbReference>
<dbReference type="FunFam" id="1.10.10.60:FF:000083">
    <property type="entry name" value="BEL1-like homeodomain protein 4"/>
    <property type="match status" value="1"/>
</dbReference>
<dbReference type="Gene3D" id="1.10.10.60">
    <property type="entry name" value="Homeodomain-like"/>
    <property type="match status" value="1"/>
</dbReference>
<dbReference type="InterPro" id="IPR001356">
    <property type="entry name" value="HD"/>
</dbReference>
<dbReference type="InterPro" id="IPR009057">
    <property type="entry name" value="Homeodomain-like_sf"/>
</dbReference>
<dbReference type="InterPro" id="IPR008422">
    <property type="entry name" value="KN_HD"/>
</dbReference>
<dbReference type="InterPro" id="IPR006563">
    <property type="entry name" value="POX_dom"/>
</dbReference>
<dbReference type="InterPro" id="IPR050224">
    <property type="entry name" value="TALE_homeobox"/>
</dbReference>
<dbReference type="PANTHER" id="PTHR11850">
    <property type="entry name" value="HOMEOBOX PROTEIN TRANSCRIPTION FACTORS"/>
    <property type="match status" value="1"/>
</dbReference>
<dbReference type="Pfam" id="PF05920">
    <property type="entry name" value="Homeobox_KN"/>
    <property type="match status" value="1"/>
</dbReference>
<dbReference type="Pfam" id="PF07526">
    <property type="entry name" value="POX"/>
    <property type="match status" value="1"/>
</dbReference>
<dbReference type="SMART" id="SM00389">
    <property type="entry name" value="HOX"/>
    <property type="match status" value="1"/>
</dbReference>
<dbReference type="SMART" id="SM00574">
    <property type="entry name" value="POX"/>
    <property type="match status" value="1"/>
</dbReference>
<dbReference type="SUPFAM" id="SSF46689">
    <property type="entry name" value="Homeodomain-like"/>
    <property type="match status" value="1"/>
</dbReference>
<dbReference type="PROSITE" id="PS00027">
    <property type="entry name" value="HOMEOBOX_1"/>
    <property type="match status" value="1"/>
</dbReference>
<dbReference type="PROSITE" id="PS50071">
    <property type="entry name" value="HOMEOBOX_2"/>
    <property type="match status" value="1"/>
</dbReference>
<protein>
    <recommendedName>
        <fullName>BEL1-like homeodomain protein 4</fullName>
        <shortName>BEL1-like protein 4</shortName>
    </recommendedName>
    <alternativeName>
        <fullName>Protein SAWTOOTH 2</fullName>
    </alternativeName>
</protein>
<accession>Q94KL5</accession>
<accession>O64826</accession>
<accession>Q56WI2</accession>
<sequence length="627" mass="69271">MGLATTTSSMSQDYHHHQGIFSFSNGFHRSSSTTHQEEVDESAVVSGAQIPVYETAGMLSEMFAYPGGGGGGSGGEILDQSTKQLLEQQNRHNNNNNSTLHMLLPNHHQGFAFTDENTMQPQQQQHFTWPSSSSDHHQNRDMIGTVHVEGGKGLSLSLSSSLAAAKAEEYRSIYCAAVDGTSSSSNASAHHHQFNQFKNLLLENSSSQHHHHQVVGHFGSSSSSPMAASSSIGGIYTLRNSKYTKPAQELLEEFCSVGRGHFKKNKLSRNNSNPNTTGGGGGGGSSSSAGTANDSPPLSPADRIEHQRRKVKLLSMLEEVDRRYNHYCEQMQMVVNSFDQVMGYGAAVPYTTLAQKAMSRHFRCLKDAVAVQLKRSCELLGDKEAAGAASSGLTKGETPRLRLLEQSLRQQRAFHHMGMMEQEAWRPQRGLPERSVNILRAWLFEHFLNPYPSDADKHLLARQTGLSRNQVSNWFINARVRLWKPMVEEMYQQEAKEREEAEEENENQQQQRRQQQTNNNDTKPNNNENNFTVITAQTPTTMTSTHHENDSSFLSSVAAASHGGSDAFTVATCQQDVSDFHVDGDGVNVIRFGTKQTGDVSLTLGLRHSGNIPDKNTSFSVRDFGDF</sequence>
<organism>
    <name type="scientific">Arabidopsis thaliana</name>
    <name type="common">Mouse-ear cress</name>
    <dbReference type="NCBI Taxonomy" id="3702"/>
    <lineage>
        <taxon>Eukaryota</taxon>
        <taxon>Viridiplantae</taxon>
        <taxon>Streptophyta</taxon>
        <taxon>Embryophyta</taxon>
        <taxon>Tracheophyta</taxon>
        <taxon>Spermatophyta</taxon>
        <taxon>Magnoliopsida</taxon>
        <taxon>eudicotyledons</taxon>
        <taxon>Gunneridae</taxon>
        <taxon>Pentapetalae</taxon>
        <taxon>rosids</taxon>
        <taxon>malvids</taxon>
        <taxon>Brassicales</taxon>
        <taxon>Brassicaceae</taxon>
        <taxon>Camelineae</taxon>
        <taxon>Arabidopsis</taxon>
    </lineage>
</organism>
<proteinExistence type="evidence at protein level"/>
<evidence type="ECO:0000250" key="1"/>
<evidence type="ECO:0000255" key="2">
    <source>
        <dbReference type="PROSITE-ProRule" id="PRU00108"/>
    </source>
</evidence>
<evidence type="ECO:0000256" key="3">
    <source>
        <dbReference type="SAM" id="MobiDB-lite"/>
    </source>
</evidence>
<evidence type="ECO:0000269" key="4">
    <source>
    </source>
</evidence>
<evidence type="ECO:0000269" key="5">
    <source>
    </source>
</evidence>
<evidence type="ECO:0000269" key="6">
    <source>
    </source>
</evidence>
<evidence type="ECO:0000305" key="7"/>
<feature type="chain" id="PRO_0000315460" description="BEL1-like homeodomain protein 4">
    <location>
        <begin position="1"/>
        <end position="627"/>
    </location>
</feature>
<feature type="DNA-binding region" description="Homeobox" evidence="2">
    <location>
        <begin position="424"/>
        <end position="486"/>
    </location>
</feature>
<feature type="region of interest" description="Disordered" evidence="3">
    <location>
        <begin position="206"/>
        <end position="225"/>
    </location>
</feature>
<feature type="region of interest" description="SR/KY domain">
    <location>
        <begin position="241"/>
        <end position="257"/>
    </location>
</feature>
<feature type="region of interest" description="Disordered" evidence="3">
    <location>
        <begin position="263"/>
        <end position="307"/>
    </location>
</feature>
<feature type="region of interest" description="BELL domain">
    <location>
        <begin position="302"/>
        <end position="373"/>
    </location>
</feature>
<feature type="region of interest" description="Disordered" evidence="3">
    <location>
        <begin position="494"/>
        <end position="530"/>
    </location>
</feature>
<feature type="compositionally biased region" description="Low complexity" evidence="3">
    <location>
        <begin position="215"/>
        <end position="225"/>
    </location>
</feature>
<feature type="compositionally biased region" description="Low complexity" evidence="3">
    <location>
        <begin position="507"/>
        <end position="530"/>
    </location>
</feature>
<feature type="sequence conflict" description="In Ref. 1; AAK43834." evidence="7" ref="1">
    <original>A</original>
    <variation>G</variation>
    <location>
        <position position="228"/>
    </location>
</feature>
<name>BLH4_ARATH</name>
<gene>
    <name type="primary">BLH4</name>
    <name type="synonym">SAW2</name>
    <name type="ordered locus">At2g23760</name>
    <name type="ORF">F27L4.6</name>
</gene>
<comment type="function">
    <text evidence="5">Transcription factor that establishes leaf shape by repressing growth in specific subdomains of the leaf. Negatively regulates knox homeobox gene KNAT1/BP expression.</text>
</comment>
<comment type="subunit">
    <text evidence="1 4 6">May form heterodimeric complexes with TALE/KNOX proteins (By similarity). Interacts with OFP1, OFP2 and OFP5 (PubMed:15781858). Interacts with KNATM, isoform KNATM-B (PubMed:18398054).</text>
</comment>
<comment type="interaction">
    <interactant intactId="EBI-1153797">
        <id>Q94KL5</id>
    </interactant>
    <interactant intactId="EBI-4475455">
        <id>Q9FG01</id>
        <label>ATO</label>
    </interactant>
    <organismsDiffer>false</organismsDiffer>
    <experiments>3</experiments>
</comment>
<comment type="interaction">
    <interactant intactId="EBI-1153797">
        <id>Q94KL5</id>
    </interactant>
    <interactant intactId="EBI-1390454">
        <id>Q9SU72</id>
        <label>EDS1</label>
    </interactant>
    <organismsDiffer>false</organismsDiffer>
    <experiments>3</experiments>
</comment>
<comment type="interaction">
    <interactant intactId="EBI-1153797">
        <id>Q94KL5</id>
    </interactant>
    <interactant intactId="EBI-963606">
        <id>Q9LQT8</id>
        <label>GAI</label>
    </interactant>
    <organismsDiffer>false</organismsDiffer>
    <experiments>3</experiments>
</comment>
<comment type="interaction">
    <interactant intactId="EBI-1153797">
        <id>Q94KL5</id>
    </interactant>
    <interactant intactId="EBI-530486">
        <id>P46639</id>
        <label>KNAT1</label>
    </interactant>
    <organismsDiffer>false</organismsDiffer>
    <experiments>3</experiments>
</comment>
<comment type="interaction">
    <interactant intactId="EBI-1153797">
        <id>Q94KL5</id>
    </interactant>
    <interactant intactId="EBI-963624">
        <id>Q9SLH3</id>
        <label>RGA</label>
    </interactant>
    <organismsDiffer>false</organismsDiffer>
    <experiments>3</experiments>
</comment>
<comment type="interaction">
    <interactant intactId="EBI-1153797">
        <id>Q94KL5</id>
    </interactant>
    <interactant intactId="EBI-963665">
        <id>Q8GXW1</id>
        <label>RGL2</label>
    </interactant>
    <organismsDiffer>false</organismsDiffer>
    <experiments>3</experiments>
</comment>
<comment type="interaction">
    <interactant intactId="EBI-1153797">
        <id>Q94KL5</id>
    </interactant>
    <interactant intactId="EBI-530523">
        <id>Q38874</id>
        <label>STM</label>
    </interactant>
    <organismsDiffer>false</organismsDiffer>
    <experiments>3</experiments>
</comment>
<comment type="interaction">
    <interactant intactId="EBI-1153797">
        <id>Q94KL5</id>
    </interactant>
    <interactant intactId="EBI-4426557">
        <id>Q84MB2</id>
        <label>TIFY8</label>
    </interactant>
    <organismsDiffer>false</organismsDiffer>
    <experiments>3</experiments>
</comment>
<comment type="subcellular location">
    <subcellularLocation>
        <location evidence="7">Nucleus</location>
    </subcellularLocation>
</comment>
<comment type="tissue specificity">
    <text evidence="5">Expressed in lateral organs.</text>
</comment>
<comment type="domain">
    <text>The SR/KY and BELL domains are responsive for the interaction between the TALE/BELL proteins and the TALE/KNOX proteins.</text>
</comment>
<comment type="similarity">
    <text evidence="7">Belongs to the TALE/BELL homeobox family.</text>
</comment>
<comment type="sequence caution" evidence="7">
    <conflict type="erroneous initiation">
        <sequence resource="EMBL-CDS" id="BAD94844"/>
    </conflict>
    <text>Truncated N-terminus.</text>
</comment>
<keyword id="KW-0238">DNA-binding</keyword>
<keyword id="KW-0371">Homeobox</keyword>
<keyword id="KW-0539">Nucleus</keyword>
<keyword id="KW-1185">Reference proteome</keyword>
<keyword id="KW-0804">Transcription</keyword>
<keyword id="KW-0805">Transcription regulation</keyword>
<reference key="1">
    <citation type="submission" date="2001-02" db="EMBL/GenBank/DDBJ databases">
        <title>KNAT1-interacting homeodomain proteins in Arabidopsis.</title>
        <authorList>
            <person name="Pidkowich M.S."/>
            <person name="Samach A."/>
            <person name="Kohalmi S.E."/>
            <person name="Crosby W.L."/>
            <person name="Haughn G.W."/>
        </authorList>
    </citation>
    <scope>NUCLEOTIDE SEQUENCE [MRNA]</scope>
</reference>
<reference key="2">
    <citation type="journal article" date="1999" name="Nature">
        <title>Sequence and analysis of chromosome 2 of the plant Arabidopsis thaliana.</title>
        <authorList>
            <person name="Lin X."/>
            <person name="Kaul S."/>
            <person name="Rounsley S.D."/>
            <person name="Shea T.P."/>
            <person name="Benito M.-I."/>
            <person name="Town C.D."/>
            <person name="Fujii C.Y."/>
            <person name="Mason T.M."/>
            <person name="Bowman C.L."/>
            <person name="Barnstead M.E."/>
            <person name="Feldblyum T.V."/>
            <person name="Buell C.R."/>
            <person name="Ketchum K.A."/>
            <person name="Lee J.J."/>
            <person name="Ronning C.M."/>
            <person name="Koo H.L."/>
            <person name="Moffat K.S."/>
            <person name="Cronin L.A."/>
            <person name="Shen M."/>
            <person name="Pai G."/>
            <person name="Van Aken S."/>
            <person name="Umayam L."/>
            <person name="Tallon L.J."/>
            <person name="Gill J.E."/>
            <person name="Adams M.D."/>
            <person name="Carrera A.J."/>
            <person name="Creasy T.H."/>
            <person name="Goodman H.M."/>
            <person name="Somerville C.R."/>
            <person name="Copenhaver G.P."/>
            <person name="Preuss D."/>
            <person name="Nierman W.C."/>
            <person name="White O."/>
            <person name="Eisen J.A."/>
            <person name="Salzberg S.L."/>
            <person name="Fraser C.M."/>
            <person name="Venter J.C."/>
        </authorList>
    </citation>
    <scope>NUCLEOTIDE SEQUENCE [LARGE SCALE GENOMIC DNA]</scope>
    <source>
        <strain>cv. Columbia</strain>
    </source>
</reference>
<reference key="3">
    <citation type="journal article" date="2017" name="Plant J.">
        <title>Araport11: a complete reannotation of the Arabidopsis thaliana reference genome.</title>
        <authorList>
            <person name="Cheng C.Y."/>
            <person name="Krishnakumar V."/>
            <person name="Chan A.P."/>
            <person name="Thibaud-Nissen F."/>
            <person name="Schobel S."/>
            <person name="Town C.D."/>
        </authorList>
    </citation>
    <scope>GENOME REANNOTATION</scope>
    <source>
        <strain>cv. Columbia</strain>
    </source>
</reference>
<reference key="4">
    <citation type="journal article" date="2003" name="Science">
        <title>Empirical analysis of transcriptional activity in the Arabidopsis genome.</title>
        <authorList>
            <person name="Yamada K."/>
            <person name="Lim J."/>
            <person name="Dale J.M."/>
            <person name="Chen H."/>
            <person name="Shinn P."/>
            <person name="Palm C.J."/>
            <person name="Southwick A.M."/>
            <person name="Wu H.C."/>
            <person name="Kim C.J."/>
            <person name="Nguyen M."/>
            <person name="Pham P.K."/>
            <person name="Cheuk R.F."/>
            <person name="Karlin-Newmann G."/>
            <person name="Liu S.X."/>
            <person name="Lam B."/>
            <person name="Sakano H."/>
            <person name="Wu T."/>
            <person name="Yu G."/>
            <person name="Miranda M."/>
            <person name="Quach H.L."/>
            <person name="Tripp M."/>
            <person name="Chang C.H."/>
            <person name="Lee J.M."/>
            <person name="Toriumi M.J."/>
            <person name="Chan M.M."/>
            <person name="Tang C.C."/>
            <person name="Onodera C.S."/>
            <person name="Deng J.M."/>
            <person name="Akiyama K."/>
            <person name="Ansari Y."/>
            <person name="Arakawa T."/>
            <person name="Banh J."/>
            <person name="Banno F."/>
            <person name="Bowser L."/>
            <person name="Brooks S.Y."/>
            <person name="Carninci P."/>
            <person name="Chao Q."/>
            <person name="Choy N."/>
            <person name="Enju A."/>
            <person name="Goldsmith A.D."/>
            <person name="Gurjal M."/>
            <person name="Hansen N.F."/>
            <person name="Hayashizaki Y."/>
            <person name="Johnson-Hopson C."/>
            <person name="Hsuan V.W."/>
            <person name="Iida K."/>
            <person name="Karnes M."/>
            <person name="Khan S."/>
            <person name="Koesema E."/>
            <person name="Ishida J."/>
            <person name="Jiang P.X."/>
            <person name="Jones T."/>
            <person name="Kawai J."/>
            <person name="Kamiya A."/>
            <person name="Meyers C."/>
            <person name="Nakajima M."/>
            <person name="Narusaka M."/>
            <person name="Seki M."/>
            <person name="Sakurai T."/>
            <person name="Satou M."/>
            <person name="Tamse R."/>
            <person name="Vaysberg M."/>
            <person name="Wallender E.K."/>
            <person name="Wong C."/>
            <person name="Yamamura Y."/>
            <person name="Yuan S."/>
            <person name="Shinozaki K."/>
            <person name="Davis R.W."/>
            <person name="Theologis A."/>
            <person name="Ecker J.R."/>
        </authorList>
    </citation>
    <scope>NUCLEOTIDE SEQUENCE [LARGE SCALE MRNA]</scope>
    <source>
        <strain>cv. Columbia</strain>
    </source>
</reference>
<reference key="5">
    <citation type="submission" date="2005-03" db="EMBL/GenBank/DDBJ databases">
        <title>Large-scale analysis of RIKEN Arabidopsis full-length (RAFL) cDNAs.</title>
        <authorList>
            <person name="Totoki Y."/>
            <person name="Seki M."/>
            <person name="Ishida J."/>
            <person name="Nakajima M."/>
            <person name="Enju A."/>
            <person name="Kamiya A."/>
            <person name="Narusaka M."/>
            <person name="Shin-i T."/>
            <person name="Nakagawa M."/>
            <person name="Sakamoto N."/>
            <person name="Oishi K."/>
            <person name="Kohara Y."/>
            <person name="Kobayashi M."/>
            <person name="Toyoda A."/>
            <person name="Sakaki Y."/>
            <person name="Sakurai T."/>
            <person name="Iida K."/>
            <person name="Akiyama K."/>
            <person name="Satou M."/>
            <person name="Toyoda T."/>
            <person name="Konagaya A."/>
            <person name="Carninci P."/>
            <person name="Kawai J."/>
            <person name="Hayashizaki Y."/>
            <person name="Shinozaki K."/>
        </authorList>
    </citation>
    <scope>NUCLEOTIDE SEQUENCE [LARGE SCALE MRNA] OF 397-627</scope>
    <source>
        <strain>cv. Columbia</strain>
    </source>
</reference>
<reference key="6">
    <citation type="journal article" date="2004" name="Curr. Biol.">
        <title>Competence to respond to floral inductive signals requires the homeobox genes PENNYWISE and POUND-FOOLISH.</title>
        <authorList>
            <person name="Smith H.M.S."/>
            <person name="Campbell B.C.C."/>
            <person name="Hake S."/>
        </authorList>
    </citation>
    <scope>GENE FAMILY ORGANIZATION</scope>
</reference>
<reference key="7">
    <citation type="journal article" date="2005" name="Proc. Natl. Acad. Sci. U.S.A.">
        <title>A central role of Arabidopsis thaliana ovate family proteins in networking and subcellular localization of 3-aa loop extension homeodomain proteins.</title>
        <authorList>
            <person name="Hackbusch J."/>
            <person name="Richter K."/>
            <person name="Muller J."/>
            <person name="Salamini F."/>
            <person name="Uhrig J.F."/>
        </authorList>
    </citation>
    <scope>INTERACTION WITH OFP1; OFP2 AND OFP5</scope>
</reference>
<reference key="8">
    <citation type="journal article" date="2007" name="Plant Cell">
        <title>The Arabidopsis BEL1-LIKE HOMEODOMAIN proteins SAW1 and SAW2 act redundantly to regulate KNOX expression spatially in leaf margins.</title>
        <authorList>
            <person name="Kumar R."/>
            <person name="Kushalappa K."/>
            <person name="Godt D."/>
            <person name="Pidkowich M.S."/>
            <person name="Pastorelli S."/>
            <person name="Hepworth S.R."/>
            <person name="Haughn G.W."/>
        </authorList>
    </citation>
    <scope>FUNCTION</scope>
    <scope>TISSUE SPECIFICITY</scope>
</reference>
<reference key="9">
    <citation type="journal article" date="2008" name="Plant Cell">
        <title>KNOX lost the OX: the Arabidopsis KNATM gene defines a novel class of KNOX transcriptional regulators missing the homeodomain.</title>
        <authorList>
            <person name="Magnani E."/>
            <person name="Hake S."/>
        </authorList>
    </citation>
    <scope>INTERACTION WITH KNATM</scope>
</reference>